<accession>P0C2L1</accession>
<keyword id="KW-0204">Cytolysis</keyword>
<keyword id="KW-1061">Dermonecrotic toxin</keyword>
<keyword id="KW-0903">Direct protein sequencing</keyword>
<keyword id="KW-1015">Disulfide bond</keyword>
<keyword id="KW-0354">Hemolysis</keyword>
<keyword id="KW-0442">Lipid degradation</keyword>
<keyword id="KW-0443">Lipid metabolism</keyword>
<keyword id="KW-0456">Lyase</keyword>
<keyword id="KW-0460">Magnesium</keyword>
<keyword id="KW-0479">Metal-binding</keyword>
<keyword id="KW-0964">Secreted</keyword>
<keyword id="KW-0800">Toxin</keyword>
<protein>
    <recommendedName>
        <fullName>Dermonecrotic toxin LlSicTox-alphaIII-1</fullName>
        <ecNumber evidence="5">4.6.1.-</ecNumber>
    </recommendedName>
    <alternativeName>
        <fullName>Phospholipase D</fullName>
        <shortName>PLD</shortName>
    </alternativeName>
    <alternativeName>
        <fullName>Sphingomyelin phosphodiesterase D</fullName>
        <shortName>SMD</shortName>
        <shortName>SMase D</shortName>
        <shortName>Sphingomyelinase D</shortName>
    </alternativeName>
</protein>
<evidence type="ECO:0000250" key="1"/>
<evidence type="ECO:0000250" key="2">
    <source>
        <dbReference type="UniProtKB" id="A0A0D4WTV1"/>
    </source>
</evidence>
<evidence type="ECO:0000250" key="3">
    <source>
        <dbReference type="UniProtKB" id="A0A0D4WV12"/>
    </source>
</evidence>
<evidence type="ECO:0000250" key="4">
    <source>
        <dbReference type="UniProtKB" id="P0CE80"/>
    </source>
</evidence>
<evidence type="ECO:0000250" key="5">
    <source>
        <dbReference type="UniProtKB" id="Q4ZFU2"/>
    </source>
</evidence>
<evidence type="ECO:0000250" key="6">
    <source>
        <dbReference type="UniProtKB" id="Q8I914"/>
    </source>
</evidence>
<evidence type="ECO:0000269" key="7">
    <source>
    </source>
</evidence>
<evidence type="ECO:0000305" key="8"/>
<evidence type="ECO:0000305" key="9">
    <source>
    </source>
</evidence>
<proteinExistence type="evidence at protein level"/>
<feature type="chain" id="PRO_0000279578" description="Dermonecrotic toxin LlSicTox-alphaIII-1">
    <location>
        <begin position="1"/>
        <end position="30" status="greater than"/>
    </location>
</feature>
<feature type="active site" evidence="6">
    <location>
        <position position="12"/>
    </location>
</feature>
<feature type="non-terminal residue">
    <location>
        <position position="30"/>
    </location>
</feature>
<reference key="1">
    <citation type="journal article" date="1996" name="J. Protein Chem.">
        <title>Compared chemical properties of dermonecrotic and lethal toxins from spiders of the genus Loxosceles (Araneae).</title>
        <authorList>
            <person name="Barbaro K.C."/>
            <person name="Sousa M.V."/>
            <person name="Morhy L."/>
            <person name="Eickstedt V.R."/>
            <person name="Mota I."/>
        </authorList>
    </citation>
    <scope>PROTEIN SEQUENCE</scope>
    <scope>SUBCELLULAR LOCATION</scope>
    <scope>FUNCTION</scope>
    <source>
        <tissue>Venom</tissue>
    </source>
</reference>
<comment type="function">
    <text evidence="2 4 7">Dermonecrotic toxins cleave the phosphodiester linkage between the phosphate and headgroup of certain phospholipids (sphingolipid and lysolipid substrates), forming an alcohol (often choline) and a cyclic phosphate (By similarity). This toxin acts on sphingomyelin (SM) (By similarity). It may also act on ceramide phosphoethanolamine (CPE), lysophosphatidylcholine (LPC) and lysophosphatidylethanolamine (LPE), but not on lysophosphatidylserine (LPS), and lysophosphatidylglycerol (LPG) (By similarity). It acts by transphosphatidylation, releasing exclusively cyclic phosphate products as second products (By similarity). In vivo, intradermal injection induces dermonecrosis (PubMed:8819009). Induces hemolysis, increased vascular permeability, edema, inflammatory response, and platelet aggregation (By similarity).</text>
</comment>
<comment type="catalytic activity">
    <reaction evidence="2">
        <text>an N-(acyl)-sphingosylphosphocholine = an N-(acyl)-sphingosyl-1,3-cyclic phosphate + choline</text>
        <dbReference type="Rhea" id="RHEA:60652"/>
        <dbReference type="ChEBI" id="CHEBI:15354"/>
        <dbReference type="ChEBI" id="CHEBI:64583"/>
        <dbReference type="ChEBI" id="CHEBI:143892"/>
    </reaction>
</comment>
<comment type="catalytic activity">
    <reaction evidence="2">
        <text>an N-(acyl)-sphingosylphosphoethanolamine = an N-(acyl)-sphingosyl-1,3-cyclic phosphate + ethanolamine</text>
        <dbReference type="Rhea" id="RHEA:60648"/>
        <dbReference type="ChEBI" id="CHEBI:57603"/>
        <dbReference type="ChEBI" id="CHEBI:143891"/>
        <dbReference type="ChEBI" id="CHEBI:143892"/>
    </reaction>
</comment>
<comment type="catalytic activity">
    <reaction evidence="2">
        <text>a 1-acyl-sn-glycero-3-phosphocholine = a 1-acyl-sn-glycero-2,3-cyclic phosphate + choline</text>
        <dbReference type="Rhea" id="RHEA:60700"/>
        <dbReference type="ChEBI" id="CHEBI:15354"/>
        <dbReference type="ChEBI" id="CHEBI:58168"/>
        <dbReference type="ChEBI" id="CHEBI:143947"/>
    </reaction>
</comment>
<comment type="catalytic activity">
    <reaction evidence="2">
        <text>a 1-acyl-sn-glycero-3-phosphoethanolamine = a 1-acyl-sn-glycero-2,3-cyclic phosphate + ethanolamine</text>
        <dbReference type="Rhea" id="RHEA:60704"/>
        <dbReference type="ChEBI" id="CHEBI:57603"/>
        <dbReference type="ChEBI" id="CHEBI:64381"/>
        <dbReference type="ChEBI" id="CHEBI:143947"/>
    </reaction>
</comment>
<comment type="cofactor">
    <cofactor evidence="6">
        <name>Mg(2+)</name>
        <dbReference type="ChEBI" id="CHEBI:18420"/>
    </cofactor>
    <text evidence="6">Binds 1 Mg(2+) ion per subunit.</text>
</comment>
<comment type="subcellular location">
    <subcellularLocation>
        <location evidence="7">Secreted</location>
    </subcellularLocation>
</comment>
<comment type="tissue specificity">
    <text evidence="9">Expressed by the venom gland.</text>
</comment>
<comment type="PTM">
    <text evidence="1">Contains 1 disulfide bond.</text>
</comment>
<comment type="similarity">
    <text evidence="8">Belongs to the arthropod phospholipase D family. Class I subfamily.</text>
</comment>
<comment type="caution">
    <text evidence="2 3 5">The most common activity assay for dermonecrotic toxins detects enzymatic activity by monitoring choline release from substrate. Liberation of choline from sphingomyelin (SM) or lysophosphatidylcholine (LPC) is commonly assumed to result from substrate hydrolysis, giving either ceramide-1-phosphate (C1P) or lysophosphatidic acid (LPA), respectively, as a second product. However, two studies from Lajoie and colleagues (2013 and 2015) report the observation of exclusive formation of cyclic phosphate products as second products, resulting from intramolecular transphosphatidylation. Cyclic phosphates have vastly different biological properties from their monoester counterparts, and they may be relevant to the pathology of brown spider envenomation.</text>
</comment>
<sequence length="30" mass="3345">ADNRRPIWNLGHMVNALKQIPTFLXDGANA</sequence>
<name>A3X1_LOXLA</name>
<dbReference type="EC" id="4.6.1.-" evidence="5"/>
<dbReference type="ArachnoServer" id="AS000141">
    <property type="toxin name" value="Sphingomyelinase D (LlSicTox1) (N-terminal fragment)"/>
</dbReference>
<dbReference type="GO" id="GO:0005576">
    <property type="term" value="C:extracellular region"/>
    <property type="evidence" value="ECO:0007669"/>
    <property type="project" value="UniProtKB-SubCell"/>
</dbReference>
<dbReference type="GO" id="GO:0016829">
    <property type="term" value="F:lyase activity"/>
    <property type="evidence" value="ECO:0007669"/>
    <property type="project" value="UniProtKB-KW"/>
</dbReference>
<dbReference type="GO" id="GO:0046872">
    <property type="term" value="F:metal ion binding"/>
    <property type="evidence" value="ECO:0007669"/>
    <property type="project" value="UniProtKB-KW"/>
</dbReference>
<dbReference type="GO" id="GO:0008081">
    <property type="term" value="F:phosphoric diester hydrolase activity"/>
    <property type="evidence" value="ECO:0007669"/>
    <property type="project" value="InterPro"/>
</dbReference>
<dbReference type="GO" id="GO:0090729">
    <property type="term" value="F:toxin activity"/>
    <property type="evidence" value="ECO:0007669"/>
    <property type="project" value="UniProtKB-KW"/>
</dbReference>
<dbReference type="GO" id="GO:0031640">
    <property type="term" value="P:killing of cells of another organism"/>
    <property type="evidence" value="ECO:0007669"/>
    <property type="project" value="UniProtKB-KW"/>
</dbReference>
<dbReference type="GO" id="GO:0016042">
    <property type="term" value="P:lipid catabolic process"/>
    <property type="evidence" value="ECO:0007669"/>
    <property type="project" value="UniProtKB-KW"/>
</dbReference>
<dbReference type="Gene3D" id="3.20.20.190">
    <property type="entry name" value="Phosphatidylinositol (PI) phosphodiesterase"/>
    <property type="match status" value="1"/>
</dbReference>
<dbReference type="InterPro" id="IPR017946">
    <property type="entry name" value="PLC-like_Pdiesterase_TIM-brl"/>
</dbReference>
<organism>
    <name type="scientific">Loxosceles laeta</name>
    <name type="common">South American recluse spider</name>
    <name type="synonym">Scytodes laeta</name>
    <dbReference type="NCBI Taxonomy" id="58217"/>
    <lineage>
        <taxon>Eukaryota</taxon>
        <taxon>Metazoa</taxon>
        <taxon>Ecdysozoa</taxon>
        <taxon>Arthropoda</taxon>
        <taxon>Chelicerata</taxon>
        <taxon>Arachnida</taxon>
        <taxon>Araneae</taxon>
        <taxon>Araneomorphae</taxon>
        <taxon>Haplogynae</taxon>
        <taxon>Scytodoidea</taxon>
        <taxon>Sicariidae</taxon>
        <taxon>Loxosceles</taxon>
    </lineage>
</organism>